<comment type="function">
    <text evidence="2 3 8">Catalytic tRNA acetyltransferase subunit of the elongator complex which is required for multiple tRNA modifications, including mcm5U (5-methoxycarbonylmethyl uridine), mcm5s2U (5-methoxycarbonylmethyl-2-thiouridine), and ncm5U (5-carbamoylmethyl uridine) (PubMed:22768388). In the elongator complex, acts as a tRNA uridine(34) acetyltransferase, which mediates formation of carboxymethyluridine in the wobble base at position 34 in tRNAs (By similarity).</text>
</comment>
<comment type="catalytic activity">
    <reaction evidence="2">
        <text>uridine(34) in tRNA + acetyl-CoA + S-adenosyl-L-methionine + H2O = 5-(carboxymethyl)uridine(34) in tRNA + 5'-deoxyadenosine + L-methionine + CoA + 2 H(+)</text>
        <dbReference type="Rhea" id="RHEA:61020"/>
        <dbReference type="Rhea" id="RHEA-COMP:10407"/>
        <dbReference type="Rhea" id="RHEA-COMP:11727"/>
        <dbReference type="ChEBI" id="CHEBI:15377"/>
        <dbReference type="ChEBI" id="CHEBI:15378"/>
        <dbReference type="ChEBI" id="CHEBI:17319"/>
        <dbReference type="ChEBI" id="CHEBI:57287"/>
        <dbReference type="ChEBI" id="CHEBI:57288"/>
        <dbReference type="ChEBI" id="CHEBI:57844"/>
        <dbReference type="ChEBI" id="CHEBI:59789"/>
        <dbReference type="ChEBI" id="CHEBI:65315"/>
        <dbReference type="ChEBI" id="CHEBI:74882"/>
        <dbReference type="EC" id="2.3.1.311"/>
    </reaction>
    <physiologicalReaction direction="left-to-right" evidence="2">
        <dbReference type="Rhea" id="RHEA:61021"/>
    </physiologicalReaction>
</comment>
<comment type="cofactor">
    <cofactor evidence="3">
        <name>[4Fe-4S] cluster</name>
        <dbReference type="ChEBI" id="CHEBI:49883"/>
    </cofactor>
    <text evidence="3">Binds 1 [4Fe-4S] cluster. The cluster is coordinated with 3 cysteines and an exchangeable S-adenosyl-L-methionine.</text>
</comment>
<comment type="pathway">
    <text evidence="8">tRNA modification; 5-methoxycarbonylmethyl-2-thiouridine-tRNA biosynthesis.</text>
</comment>
<comment type="subunit">
    <text evidence="3">Component of the elongator complex.</text>
</comment>
<comment type="subcellular location">
    <subcellularLocation>
        <location evidence="7">Cytoplasm</location>
    </subcellularLocation>
</comment>
<comment type="disruption phenotype">
    <text evidence="9">Sensitive to methyl methanesulfonate (MMS, causes DNA breaks), thiabendazole (TBZ), sirolimus (TORC1 inhibitor), thermal stress, and cold (PubMed:28775286). Abnormal septation during thermal stress (PubMed:28775286). Global protein levels are unaffected (PubMed:28775286).</text>
</comment>
<comment type="similarity">
    <text evidence="11">Belongs to the ELP3 family.</text>
</comment>
<comment type="caution">
    <text evidence="4">The elongator complex was originally thought to play a role in transcription elongation. However, it is no longer thought to play a direct role in this process and its primary function is thought to be in tRNA modification.</text>
</comment>
<evidence type="ECO:0000250" key="1">
    <source>
        <dbReference type="UniProtKB" id="A0A1C7D1B7"/>
    </source>
</evidence>
<evidence type="ECO:0000250" key="2">
    <source>
        <dbReference type="UniProtKB" id="D5VRB9"/>
    </source>
</evidence>
<evidence type="ECO:0000250" key="3">
    <source>
        <dbReference type="UniProtKB" id="Q02908"/>
    </source>
</evidence>
<evidence type="ECO:0000250" key="4">
    <source>
        <dbReference type="UniProtKB" id="Q9H9T3"/>
    </source>
</evidence>
<evidence type="ECO:0000255" key="5">
    <source>
        <dbReference type="PROSITE-ProRule" id="PRU00532"/>
    </source>
</evidence>
<evidence type="ECO:0000255" key="6">
    <source>
        <dbReference type="PROSITE-ProRule" id="PRU01266"/>
    </source>
</evidence>
<evidence type="ECO:0000269" key="7">
    <source>
    </source>
</evidence>
<evidence type="ECO:0000269" key="8">
    <source>
    </source>
</evidence>
<evidence type="ECO:0000269" key="9">
    <source>
    </source>
</evidence>
<evidence type="ECO:0000303" key="10">
    <source>
    </source>
</evidence>
<evidence type="ECO:0000305" key="11"/>
<evidence type="ECO:0000312" key="12">
    <source>
        <dbReference type="PomBase" id="SPAC29A4.20"/>
    </source>
</evidence>
<accession>O14023</accession>
<dbReference type="EC" id="2.3.1.311" evidence="2"/>
<dbReference type="EMBL" id="CU329670">
    <property type="protein sequence ID" value="CAB10146.1"/>
    <property type="molecule type" value="Genomic_DNA"/>
</dbReference>
<dbReference type="PIR" id="T38469">
    <property type="entry name" value="T38469"/>
</dbReference>
<dbReference type="RefSeq" id="NP_594862.1">
    <property type="nucleotide sequence ID" value="NM_001020291.2"/>
</dbReference>
<dbReference type="SMR" id="O14023"/>
<dbReference type="BioGRID" id="278111">
    <property type="interactions" value="341"/>
</dbReference>
<dbReference type="ComplexPortal" id="CPX-25728">
    <property type="entry name" value="Elongator holoenzyme complex"/>
</dbReference>
<dbReference type="FunCoup" id="O14023">
    <property type="interactions" value="730"/>
</dbReference>
<dbReference type="STRING" id="284812.O14023"/>
<dbReference type="iPTMnet" id="O14023"/>
<dbReference type="PaxDb" id="4896-SPAC29A4.20.1"/>
<dbReference type="EnsemblFungi" id="SPAC29A4.20.1">
    <property type="protein sequence ID" value="SPAC29A4.20.1:pep"/>
    <property type="gene ID" value="SPAC29A4.20"/>
</dbReference>
<dbReference type="GeneID" id="2541614"/>
<dbReference type="KEGG" id="spo:2541614"/>
<dbReference type="PomBase" id="SPAC29A4.20">
    <property type="gene designation" value="elp3"/>
</dbReference>
<dbReference type="VEuPathDB" id="FungiDB:SPAC29A4.20"/>
<dbReference type="eggNOG" id="KOG2535">
    <property type="taxonomic scope" value="Eukaryota"/>
</dbReference>
<dbReference type="HOGENOM" id="CLU_025983_2_1_1"/>
<dbReference type="InParanoid" id="O14023"/>
<dbReference type="OMA" id="TFETRPD"/>
<dbReference type="PhylomeDB" id="O14023"/>
<dbReference type="UniPathway" id="UPA00988"/>
<dbReference type="PRO" id="PR:O14023"/>
<dbReference type="Proteomes" id="UP000002485">
    <property type="component" value="Chromosome I"/>
</dbReference>
<dbReference type="GO" id="GO:0005737">
    <property type="term" value="C:cytoplasm"/>
    <property type="evidence" value="ECO:0007005"/>
    <property type="project" value="PomBase"/>
</dbReference>
<dbReference type="GO" id="GO:0005829">
    <property type="term" value="C:cytosol"/>
    <property type="evidence" value="ECO:0007005"/>
    <property type="project" value="PomBase"/>
</dbReference>
<dbReference type="GO" id="GO:0033588">
    <property type="term" value="C:elongator holoenzyme complex"/>
    <property type="evidence" value="ECO:0000318"/>
    <property type="project" value="GO_Central"/>
</dbReference>
<dbReference type="GO" id="GO:0005634">
    <property type="term" value="C:nucleus"/>
    <property type="evidence" value="ECO:0000318"/>
    <property type="project" value="GO_Central"/>
</dbReference>
<dbReference type="GO" id="GO:0051539">
    <property type="term" value="F:4 iron, 4 sulfur cluster binding"/>
    <property type="evidence" value="ECO:0007669"/>
    <property type="project" value="UniProtKB-KW"/>
</dbReference>
<dbReference type="GO" id="GO:0046872">
    <property type="term" value="F:metal ion binding"/>
    <property type="evidence" value="ECO:0007669"/>
    <property type="project" value="UniProtKB-KW"/>
</dbReference>
<dbReference type="GO" id="GO:0000049">
    <property type="term" value="F:tRNA binding"/>
    <property type="evidence" value="ECO:0007669"/>
    <property type="project" value="UniProtKB-KW"/>
</dbReference>
<dbReference type="GO" id="GO:0106261">
    <property type="term" value="F:tRNA uridine(34) acetyltransferase activity"/>
    <property type="evidence" value="ECO:0000250"/>
    <property type="project" value="PomBase"/>
</dbReference>
<dbReference type="GO" id="GO:0140018">
    <property type="term" value="P:regulation of cytoplasmic translational fidelity"/>
    <property type="evidence" value="ECO:0000315"/>
    <property type="project" value="PomBase"/>
</dbReference>
<dbReference type="GO" id="GO:0002926">
    <property type="term" value="P:tRNA wobble base 5-methoxycarbonylmethyl-2-thiouridinylation"/>
    <property type="evidence" value="ECO:0000315"/>
    <property type="project" value="PomBase"/>
</dbReference>
<dbReference type="CDD" id="cd01335">
    <property type="entry name" value="Radical_SAM"/>
    <property type="match status" value="1"/>
</dbReference>
<dbReference type="FunFam" id="3.40.630.30:FF:000003">
    <property type="entry name" value="Elongator complex protein 3"/>
    <property type="match status" value="1"/>
</dbReference>
<dbReference type="Gene3D" id="3.40.630.30">
    <property type="match status" value="1"/>
</dbReference>
<dbReference type="InterPro" id="IPR016181">
    <property type="entry name" value="Acyl_CoA_acyltransferase"/>
</dbReference>
<dbReference type="InterPro" id="IPR039661">
    <property type="entry name" value="ELP3"/>
</dbReference>
<dbReference type="InterPro" id="IPR034687">
    <property type="entry name" value="ELP3-like"/>
</dbReference>
<dbReference type="InterPro" id="IPR056591">
    <property type="entry name" value="ELP3-like_N"/>
</dbReference>
<dbReference type="InterPro" id="IPR006638">
    <property type="entry name" value="Elp3/MiaA/NifB-like_rSAM"/>
</dbReference>
<dbReference type="InterPro" id="IPR000182">
    <property type="entry name" value="GNAT_dom"/>
</dbReference>
<dbReference type="InterPro" id="IPR032432">
    <property type="entry name" value="Radical_SAM_C"/>
</dbReference>
<dbReference type="InterPro" id="IPR007197">
    <property type="entry name" value="rSAM"/>
</dbReference>
<dbReference type="NCBIfam" id="TIGR01211">
    <property type="entry name" value="ELP3"/>
    <property type="match status" value="1"/>
</dbReference>
<dbReference type="PANTHER" id="PTHR11135:SF0">
    <property type="entry name" value="ELONGATOR COMPLEX PROTEIN 3"/>
    <property type="match status" value="1"/>
</dbReference>
<dbReference type="PANTHER" id="PTHR11135">
    <property type="entry name" value="HISTONE ACETYLTRANSFERASE-RELATED"/>
    <property type="match status" value="1"/>
</dbReference>
<dbReference type="Pfam" id="PF23613">
    <property type="entry name" value="ELP3_N"/>
    <property type="match status" value="1"/>
</dbReference>
<dbReference type="Pfam" id="PF04055">
    <property type="entry name" value="Radical_SAM"/>
    <property type="match status" value="1"/>
</dbReference>
<dbReference type="Pfam" id="PF16199">
    <property type="entry name" value="Radical_SAM_C"/>
    <property type="match status" value="1"/>
</dbReference>
<dbReference type="PIRSF" id="PIRSF005669">
    <property type="entry name" value="Hist_AcTrfase_ELP3"/>
    <property type="match status" value="1"/>
</dbReference>
<dbReference type="SFLD" id="SFLDG01086">
    <property type="entry name" value="elongater_protein-like"/>
    <property type="match status" value="1"/>
</dbReference>
<dbReference type="SFLD" id="SFLDF00344">
    <property type="entry name" value="ELP3-like"/>
    <property type="match status" value="1"/>
</dbReference>
<dbReference type="SMART" id="SM00729">
    <property type="entry name" value="Elp3"/>
    <property type="match status" value="1"/>
</dbReference>
<dbReference type="SUPFAM" id="SSF55729">
    <property type="entry name" value="Acyl-CoA N-acyltransferases (Nat)"/>
    <property type="match status" value="1"/>
</dbReference>
<dbReference type="SUPFAM" id="SSF102114">
    <property type="entry name" value="Radical SAM enzymes"/>
    <property type="match status" value="1"/>
</dbReference>
<dbReference type="PROSITE" id="PS51186">
    <property type="entry name" value="GNAT"/>
    <property type="match status" value="1"/>
</dbReference>
<dbReference type="PROSITE" id="PS51918">
    <property type="entry name" value="RADICAL_SAM"/>
    <property type="match status" value="1"/>
</dbReference>
<feature type="chain" id="PRO_0000310360" description="Elongator complex protein 3">
    <location>
        <begin position="1"/>
        <end position="544"/>
    </location>
</feature>
<feature type="domain" description="Radical SAM core" evidence="6">
    <location>
        <begin position="79"/>
        <end position="369"/>
    </location>
</feature>
<feature type="domain" description="N-acetyltransferase" evidence="5">
    <location>
        <begin position="393"/>
        <end position="544"/>
    </location>
</feature>
<feature type="binding site" evidence="3">
    <location>
        <position position="96"/>
    </location>
    <ligand>
        <name>[4Fe-4S] cluster</name>
        <dbReference type="ChEBI" id="CHEBI:49883"/>
        <note>4Fe-4S-S-AdoMet</note>
    </ligand>
</feature>
<feature type="binding site" evidence="3">
    <location>
        <position position="106"/>
    </location>
    <ligand>
        <name>[4Fe-4S] cluster</name>
        <dbReference type="ChEBI" id="CHEBI:49883"/>
        <note>4Fe-4S-S-AdoMet</note>
    </ligand>
</feature>
<feature type="binding site" evidence="3">
    <location>
        <position position="109"/>
    </location>
    <ligand>
        <name>[4Fe-4S] cluster</name>
        <dbReference type="ChEBI" id="CHEBI:49883"/>
        <note>4Fe-4S-S-AdoMet</note>
    </ligand>
</feature>
<feature type="binding site" evidence="1">
    <location>
        <position position="161"/>
    </location>
    <ligand>
        <name>acetyl-CoA</name>
        <dbReference type="ChEBI" id="CHEBI:57288"/>
    </ligand>
</feature>
<feature type="binding site" evidence="1">
    <location>
        <begin position="472"/>
        <end position="475"/>
    </location>
    <ligand>
        <name>acetyl-CoA</name>
        <dbReference type="ChEBI" id="CHEBI:57288"/>
    </ligand>
</feature>
<feature type="binding site" evidence="1">
    <location>
        <begin position="495"/>
        <end position="497"/>
    </location>
    <ligand>
        <name>acetyl-CoA</name>
        <dbReference type="ChEBI" id="CHEBI:57288"/>
    </ligand>
</feature>
<feature type="binding site" evidence="1">
    <location>
        <position position="528"/>
    </location>
    <ligand>
        <name>acetyl-CoA</name>
        <dbReference type="ChEBI" id="CHEBI:57288"/>
    </ligand>
</feature>
<proteinExistence type="inferred from homology"/>
<protein>
    <recommendedName>
        <fullName>Elongator complex protein 3</fullName>
        <ecNumber evidence="2">2.3.1.311</ecNumber>
    </recommendedName>
    <alternativeName>
        <fullName evidence="11">tRNA uridine(34) acetyltransferase</fullName>
    </alternativeName>
</protein>
<gene>
    <name evidence="10 12" type="primary">elp3</name>
    <name type="ORF">SPAC29A4.20</name>
</gene>
<organism>
    <name type="scientific">Schizosaccharomyces pombe (strain 972 / ATCC 24843)</name>
    <name type="common">Fission yeast</name>
    <dbReference type="NCBI Taxonomy" id="284812"/>
    <lineage>
        <taxon>Eukaryota</taxon>
        <taxon>Fungi</taxon>
        <taxon>Dikarya</taxon>
        <taxon>Ascomycota</taxon>
        <taxon>Taphrinomycotina</taxon>
        <taxon>Schizosaccharomycetes</taxon>
        <taxon>Schizosaccharomycetales</taxon>
        <taxon>Schizosaccharomycetaceae</taxon>
        <taxon>Schizosaccharomyces</taxon>
    </lineage>
</organism>
<keyword id="KW-0004">4Fe-4S</keyword>
<keyword id="KW-0012">Acyltransferase</keyword>
<keyword id="KW-0963">Cytoplasm</keyword>
<keyword id="KW-0408">Iron</keyword>
<keyword id="KW-0411">Iron-sulfur</keyword>
<keyword id="KW-0479">Metal-binding</keyword>
<keyword id="KW-1185">Reference proteome</keyword>
<keyword id="KW-0694">RNA-binding</keyword>
<keyword id="KW-0949">S-adenosyl-L-methionine</keyword>
<keyword id="KW-0808">Transferase</keyword>
<keyword id="KW-0819">tRNA processing</keyword>
<keyword id="KW-0820">tRNA-binding</keyword>
<sequence length="544" mass="61850">MSTSSLAFLKAKACAEIVAELIASENQNKVINLNALKMRISKKHQLSESPRLTDIIAAIPPDAYLKESLMRKLRAKPVRTASGIAVVAVMCKPHRCPHIAMTGNVCVYCPGGPDSDFEYSTQSYTGYEPTSMRAIRARYDPYEQARGRVEQLRSLGHTVDKVEYIIMGGTFMSLPESYRHTFIANLHNALSGATTEDLDEAVKFSEQSETKCVGITIETRPDYCLDQHLDEMLRYGCTRLEIGVQSVYEDVARDTNRGHTVKAVCETFQLAKDTGYKVVTHMMPDLPNVGMERDIFQFQEYFENPAFRTDGLKLYPTLVIRGTGLYELWKTGRYKNYTPNALVDLIARILALVPPWTRIYRIQRDIPMPLVSSGVETGNLRELALNRMRDLGTKCRDIRAREVGMQEVHHKIHPEQVELLRRDYTANGGWETFLSYEDPKQDILIGLLRLRQCSDKTYRPEFTSQPTSLVRELHVYGSAVPVHSRDPKKFQHQGFGTLLLEEAERIAKYEHGSKKISVISGVGVRKYYQKLGYTLDGPYMSKWL</sequence>
<name>ELP3_SCHPO</name>
<reference key="1">
    <citation type="journal article" date="2002" name="Nature">
        <title>The genome sequence of Schizosaccharomyces pombe.</title>
        <authorList>
            <person name="Wood V."/>
            <person name="Gwilliam R."/>
            <person name="Rajandream M.A."/>
            <person name="Lyne M.H."/>
            <person name="Lyne R."/>
            <person name="Stewart A."/>
            <person name="Sgouros J.G."/>
            <person name="Peat N."/>
            <person name="Hayles J."/>
            <person name="Baker S.G."/>
            <person name="Basham D."/>
            <person name="Bowman S."/>
            <person name="Brooks K."/>
            <person name="Brown D."/>
            <person name="Brown S."/>
            <person name="Chillingworth T."/>
            <person name="Churcher C.M."/>
            <person name="Collins M."/>
            <person name="Connor R."/>
            <person name="Cronin A."/>
            <person name="Davis P."/>
            <person name="Feltwell T."/>
            <person name="Fraser A."/>
            <person name="Gentles S."/>
            <person name="Goble A."/>
            <person name="Hamlin N."/>
            <person name="Harris D.E."/>
            <person name="Hidalgo J."/>
            <person name="Hodgson G."/>
            <person name="Holroyd S."/>
            <person name="Hornsby T."/>
            <person name="Howarth S."/>
            <person name="Huckle E.J."/>
            <person name="Hunt S."/>
            <person name="Jagels K."/>
            <person name="James K.D."/>
            <person name="Jones L."/>
            <person name="Jones M."/>
            <person name="Leather S."/>
            <person name="McDonald S."/>
            <person name="McLean J."/>
            <person name="Mooney P."/>
            <person name="Moule S."/>
            <person name="Mungall K.L."/>
            <person name="Murphy L.D."/>
            <person name="Niblett D."/>
            <person name="Odell C."/>
            <person name="Oliver K."/>
            <person name="O'Neil S."/>
            <person name="Pearson D."/>
            <person name="Quail M.A."/>
            <person name="Rabbinowitsch E."/>
            <person name="Rutherford K.M."/>
            <person name="Rutter S."/>
            <person name="Saunders D."/>
            <person name="Seeger K."/>
            <person name="Sharp S."/>
            <person name="Skelton J."/>
            <person name="Simmonds M.N."/>
            <person name="Squares R."/>
            <person name="Squares S."/>
            <person name="Stevens K."/>
            <person name="Taylor K."/>
            <person name="Taylor R.G."/>
            <person name="Tivey A."/>
            <person name="Walsh S.V."/>
            <person name="Warren T."/>
            <person name="Whitehead S."/>
            <person name="Woodward J.R."/>
            <person name="Volckaert G."/>
            <person name="Aert R."/>
            <person name="Robben J."/>
            <person name="Grymonprez B."/>
            <person name="Weltjens I."/>
            <person name="Vanstreels E."/>
            <person name="Rieger M."/>
            <person name="Schaefer M."/>
            <person name="Mueller-Auer S."/>
            <person name="Gabel C."/>
            <person name="Fuchs M."/>
            <person name="Duesterhoeft A."/>
            <person name="Fritzc C."/>
            <person name="Holzer E."/>
            <person name="Moestl D."/>
            <person name="Hilbert H."/>
            <person name="Borzym K."/>
            <person name="Langer I."/>
            <person name="Beck A."/>
            <person name="Lehrach H."/>
            <person name="Reinhardt R."/>
            <person name="Pohl T.M."/>
            <person name="Eger P."/>
            <person name="Zimmermann W."/>
            <person name="Wedler H."/>
            <person name="Wambutt R."/>
            <person name="Purnelle B."/>
            <person name="Goffeau A."/>
            <person name="Cadieu E."/>
            <person name="Dreano S."/>
            <person name="Gloux S."/>
            <person name="Lelaure V."/>
            <person name="Mottier S."/>
            <person name="Galibert F."/>
            <person name="Aves S.J."/>
            <person name="Xiang Z."/>
            <person name="Hunt C."/>
            <person name="Moore K."/>
            <person name="Hurst S.M."/>
            <person name="Lucas M."/>
            <person name="Rochet M."/>
            <person name="Gaillardin C."/>
            <person name="Tallada V.A."/>
            <person name="Garzon A."/>
            <person name="Thode G."/>
            <person name="Daga R.R."/>
            <person name="Cruzado L."/>
            <person name="Jimenez J."/>
            <person name="Sanchez M."/>
            <person name="del Rey F."/>
            <person name="Benito J."/>
            <person name="Dominguez A."/>
            <person name="Revuelta J.L."/>
            <person name="Moreno S."/>
            <person name="Armstrong J."/>
            <person name="Forsburg S.L."/>
            <person name="Cerutti L."/>
            <person name="Lowe T."/>
            <person name="McCombie W.R."/>
            <person name="Paulsen I."/>
            <person name="Potashkin J."/>
            <person name="Shpakovski G.V."/>
            <person name="Ussery D."/>
            <person name="Barrell B.G."/>
            <person name="Nurse P."/>
        </authorList>
    </citation>
    <scope>NUCLEOTIDE SEQUENCE [LARGE SCALE GENOMIC DNA]</scope>
    <source>
        <strain>972 / ATCC 24843</strain>
    </source>
</reference>
<reference key="2">
    <citation type="journal article" date="2006" name="Nat. Biotechnol.">
        <title>ORFeome cloning and global analysis of protein localization in the fission yeast Schizosaccharomyces pombe.</title>
        <authorList>
            <person name="Matsuyama A."/>
            <person name="Arai R."/>
            <person name="Yashiroda Y."/>
            <person name="Shirai A."/>
            <person name="Kamata A."/>
            <person name="Sekido S."/>
            <person name="Kobayashi Y."/>
            <person name="Hashimoto A."/>
            <person name="Hamamoto M."/>
            <person name="Hiraoka Y."/>
            <person name="Horinouchi S."/>
            <person name="Yoshida M."/>
        </authorList>
    </citation>
    <scope>SUBCELLULAR LOCATION [LARGE SCALE ANALYSIS]</scope>
</reference>
<reference key="3">
    <citation type="journal article" date="2012" name="Cell Rep.">
        <title>Translational control of cell division by Elongator.</title>
        <authorList>
            <person name="Bauer F."/>
            <person name="Matsuyama A."/>
            <person name="Candiracci J."/>
            <person name="Dieu M."/>
            <person name="Scheliga J."/>
            <person name="Wolf D.A."/>
            <person name="Yoshida M."/>
            <person name="Hermand D."/>
        </authorList>
    </citation>
    <scope>FUNCTION</scope>
    <scope>PATHWAY</scope>
</reference>
<reference key="4">
    <citation type="journal article" date="2017" name="Sci. Rep.">
        <title>Elp3 and Dph3 of Schizosaccharomyces pombe mediate cellular stress responses through tRNALysUUU modifications.</title>
        <authorList>
            <person name="Villahermosa D."/>
            <person name="Fleck O."/>
        </authorList>
    </citation>
    <scope>DISRUPTION PHENOTYPE</scope>
</reference>